<accession>A6WS76</accession>
<protein>
    <recommendedName>
        <fullName evidence="1">Phosphoglycerate kinase</fullName>
        <ecNumber evidence="1">2.7.2.3</ecNumber>
    </recommendedName>
</protein>
<feature type="chain" id="PRO_1000058055" description="Phosphoglycerate kinase">
    <location>
        <begin position="1"/>
        <end position="391"/>
    </location>
</feature>
<feature type="binding site" evidence="1">
    <location>
        <begin position="21"/>
        <end position="23"/>
    </location>
    <ligand>
        <name>substrate</name>
    </ligand>
</feature>
<feature type="binding site" evidence="1">
    <location>
        <position position="36"/>
    </location>
    <ligand>
        <name>substrate</name>
    </ligand>
</feature>
<feature type="binding site" evidence="1">
    <location>
        <begin position="59"/>
        <end position="62"/>
    </location>
    <ligand>
        <name>substrate</name>
    </ligand>
</feature>
<feature type="binding site" evidence="1">
    <location>
        <position position="113"/>
    </location>
    <ligand>
        <name>substrate</name>
    </ligand>
</feature>
<feature type="binding site" evidence="1">
    <location>
        <position position="146"/>
    </location>
    <ligand>
        <name>substrate</name>
    </ligand>
</feature>
<feature type="binding site" evidence="1">
    <location>
        <position position="197"/>
    </location>
    <ligand>
        <name>ATP</name>
        <dbReference type="ChEBI" id="CHEBI:30616"/>
    </ligand>
</feature>
<feature type="binding site" evidence="1">
    <location>
        <position position="319"/>
    </location>
    <ligand>
        <name>ATP</name>
        <dbReference type="ChEBI" id="CHEBI:30616"/>
    </ligand>
</feature>
<feature type="binding site" evidence="1">
    <location>
        <begin position="345"/>
        <end position="348"/>
    </location>
    <ligand>
        <name>ATP</name>
        <dbReference type="ChEBI" id="CHEBI:30616"/>
    </ligand>
</feature>
<proteinExistence type="inferred from homology"/>
<name>PGK_SHEB8</name>
<reference key="1">
    <citation type="submission" date="2007-07" db="EMBL/GenBank/DDBJ databases">
        <title>Complete sequence of chromosome of Shewanella baltica OS185.</title>
        <authorList>
            <consortium name="US DOE Joint Genome Institute"/>
            <person name="Copeland A."/>
            <person name="Lucas S."/>
            <person name="Lapidus A."/>
            <person name="Barry K."/>
            <person name="Glavina del Rio T."/>
            <person name="Dalin E."/>
            <person name="Tice H."/>
            <person name="Pitluck S."/>
            <person name="Sims D."/>
            <person name="Brettin T."/>
            <person name="Bruce D."/>
            <person name="Detter J.C."/>
            <person name="Han C."/>
            <person name="Schmutz J."/>
            <person name="Larimer F."/>
            <person name="Land M."/>
            <person name="Hauser L."/>
            <person name="Kyrpides N."/>
            <person name="Mikhailova N."/>
            <person name="Brettar I."/>
            <person name="Rodrigues J."/>
            <person name="Konstantinidis K."/>
            <person name="Tiedje J."/>
            <person name="Richardson P."/>
        </authorList>
    </citation>
    <scope>NUCLEOTIDE SEQUENCE [LARGE SCALE GENOMIC DNA]</scope>
    <source>
        <strain>OS185</strain>
    </source>
</reference>
<keyword id="KW-0067">ATP-binding</keyword>
<keyword id="KW-0963">Cytoplasm</keyword>
<keyword id="KW-0324">Glycolysis</keyword>
<keyword id="KW-0418">Kinase</keyword>
<keyword id="KW-0547">Nucleotide-binding</keyword>
<keyword id="KW-0808">Transferase</keyword>
<gene>
    <name evidence="1" type="primary">pgk</name>
    <name type="ordered locus">Shew185_3538</name>
</gene>
<dbReference type="EC" id="2.7.2.3" evidence="1"/>
<dbReference type="EMBL" id="CP000753">
    <property type="protein sequence ID" value="ABS09665.1"/>
    <property type="molecule type" value="Genomic_DNA"/>
</dbReference>
<dbReference type="RefSeq" id="WP_012090104.1">
    <property type="nucleotide sequence ID" value="NC_009665.1"/>
</dbReference>
<dbReference type="SMR" id="A6WS76"/>
<dbReference type="KEGG" id="sbm:Shew185_3538"/>
<dbReference type="HOGENOM" id="CLU_025427_0_2_6"/>
<dbReference type="UniPathway" id="UPA00109">
    <property type="reaction ID" value="UER00185"/>
</dbReference>
<dbReference type="GO" id="GO:0005829">
    <property type="term" value="C:cytosol"/>
    <property type="evidence" value="ECO:0007669"/>
    <property type="project" value="TreeGrafter"/>
</dbReference>
<dbReference type="GO" id="GO:0043531">
    <property type="term" value="F:ADP binding"/>
    <property type="evidence" value="ECO:0007669"/>
    <property type="project" value="TreeGrafter"/>
</dbReference>
<dbReference type="GO" id="GO:0005524">
    <property type="term" value="F:ATP binding"/>
    <property type="evidence" value="ECO:0007669"/>
    <property type="project" value="UniProtKB-KW"/>
</dbReference>
<dbReference type="GO" id="GO:0004618">
    <property type="term" value="F:phosphoglycerate kinase activity"/>
    <property type="evidence" value="ECO:0007669"/>
    <property type="project" value="UniProtKB-UniRule"/>
</dbReference>
<dbReference type="GO" id="GO:0006094">
    <property type="term" value="P:gluconeogenesis"/>
    <property type="evidence" value="ECO:0007669"/>
    <property type="project" value="TreeGrafter"/>
</dbReference>
<dbReference type="GO" id="GO:0006096">
    <property type="term" value="P:glycolytic process"/>
    <property type="evidence" value="ECO:0007669"/>
    <property type="project" value="UniProtKB-UniRule"/>
</dbReference>
<dbReference type="FunFam" id="3.40.50.1260:FF:000001">
    <property type="entry name" value="Phosphoglycerate kinase"/>
    <property type="match status" value="1"/>
</dbReference>
<dbReference type="FunFam" id="3.40.50.1260:FF:000002">
    <property type="entry name" value="Phosphoglycerate kinase"/>
    <property type="match status" value="1"/>
</dbReference>
<dbReference type="Gene3D" id="3.40.50.1260">
    <property type="entry name" value="Phosphoglycerate kinase, N-terminal domain"/>
    <property type="match status" value="2"/>
</dbReference>
<dbReference type="HAMAP" id="MF_00145">
    <property type="entry name" value="Phosphoglyc_kinase"/>
    <property type="match status" value="1"/>
</dbReference>
<dbReference type="InterPro" id="IPR001576">
    <property type="entry name" value="Phosphoglycerate_kinase"/>
</dbReference>
<dbReference type="InterPro" id="IPR015911">
    <property type="entry name" value="Phosphoglycerate_kinase_CS"/>
</dbReference>
<dbReference type="InterPro" id="IPR015824">
    <property type="entry name" value="Phosphoglycerate_kinase_N"/>
</dbReference>
<dbReference type="InterPro" id="IPR036043">
    <property type="entry name" value="Phosphoglycerate_kinase_sf"/>
</dbReference>
<dbReference type="PANTHER" id="PTHR11406">
    <property type="entry name" value="PHOSPHOGLYCERATE KINASE"/>
    <property type="match status" value="1"/>
</dbReference>
<dbReference type="PANTHER" id="PTHR11406:SF23">
    <property type="entry name" value="PHOSPHOGLYCERATE KINASE 1, CHLOROPLASTIC-RELATED"/>
    <property type="match status" value="1"/>
</dbReference>
<dbReference type="Pfam" id="PF00162">
    <property type="entry name" value="PGK"/>
    <property type="match status" value="1"/>
</dbReference>
<dbReference type="PIRSF" id="PIRSF000724">
    <property type="entry name" value="Pgk"/>
    <property type="match status" value="1"/>
</dbReference>
<dbReference type="PRINTS" id="PR00477">
    <property type="entry name" value="PHGLYCKINASE"/>
</dbReference>
<dbReference type="SUPFAM" id="SSF53748">
    <property type="entry name" value="Phosphoglycerate kinase"/>
    <property type="match status" value="1"/>
</dbReference>
<dbReference type="PROSITE" id="PS00111">
    <property type="entry name" value="PGLYCERATE_KINASE"/>
    <property type="match status" value="1"/>
</dbReference>
<organism>
    <name type="scientific">Shewanella baltica (strain OS185)</name>
    <dbReference type="NCBI Taxonomy" id="402882"/>
    <lineage>
        <taxon>Bacteria</taxon>
        <taxon>Pseudomonadati</taxon>
        <taxon>Pseudomonadota</taxon>
        <taxon>Gammaproteobacteria</taxon>
        <taxon>Alteromonadales</taxon>
        <taxon>Shewanellaceae</taxon>
        <taxon>Shewanella</taxon>
    </lineage>
</organism>
<comment type="catalytic activity">
    <reaction evidence="1">
        <text>(2R)-3-phosphoglycerate + ATP = (2R)-3-phospho-glyceroyl phosphate + ADP</text>
        <dbReference type="Rhea" id="RHEA:14801"/>
        <dbReference type="ChEBI" id="CHEBI:30616"/>
        <dbReference type="ChEBI" id="CHEBI:57604"/>
        <dbReference type="ChEBI" id="CHEBI:58272"/>
        <dbReference type="ChEBI" id="CHEBI:456216"/>
        <dbReference type="EC" id="2.7.2.3"/>
    </reaction>
</comment>
<comment type="pathway">
    <text evidence="1">Carbohydrate degradation; glycolysis; pyruvate from D-glyceraldehyde 3-phosphate: step 2/5.</text>
</comment>
<comment type="subunit">
    <text evidence="1">Monomer.</text>
</comment>
<comment type="subcellular location">
    <subcellularLocation>
        <location evidence="1">Cytoplasm</location>
    </subcellularLocation>
</comment>
<comment type="similarity">
    <text evidence="1">Belongs to the phosphoglycerate kinase family.</text>
</comment>
<sequence length="391" mass="40630">MAIINMSDLDLQGKRVLIREDLNVPVSNGVVTSDARLRASLPTIELALAKGAAVMVMSHLGRPTEGEYNPEYSMQPVVDYLAKALSCPVSLATDYLDGVDVAVGEVVVFENVRFNVGEGKNNEELSQKMAALCDVYVMDAFGTAHRAQASTHGVGMFAPIACAGPLLAQELDALGKALDNPARPMVAIVGGSKVSTKLTVLESLSGIVDQLVVGGGIANTFIAAAGYNVGKSLYEADLIDEAKRLVANAKSRGADIPVPTDVVVAGEFSPTAAATLKSVSEVADSEMIFDIGPDSAEALAKIIESAGTIVWNGPVGVFEFDQFGEGTKRIAQAIADSKAFSIAGGGDTLAAVDKYGIADKVSYISTGGGAFLEFLEGKELPAVAMLEKRGA</sequence>
<evidence type="ECO:0000255" key="1">
    <source>
        <dbReference type="HAMAP-Rule" id="MF_00145"/>
    </source>
</evidence>